<evidence type="ECO:0000250" key="1"/>
<evidence type="ECO:0000250" key="2">
    <source>
        <dbReference type="UniProtKB" id="A0PJE2"/>
    </source>
</evidence>
<evidence type="ECO:0000250" key="3">
    <source>
        <dbReference type="UniProtKB" id="Q99714"/>
    </source>
</evidence>
<evidence type="ECO:0000305" key="4"/>
<name>DHR12_BOVIN</name>
<gene>
    <name type="primary">DHRS12</name>
    <name evidence="2" type="synonym">SDR40C1</name>
</gene>
<comment type="function">
    <text evidence="1">Putative oxidoreductase.</text>
</comment>
<comment type="similarity">
    <text evidence="4">Belongs to the short-chain dehydrogenases/reductases (SDR) family.</text>
</comment>
<dbReference type="EC" id="1.1.-.-" evidence="4"/>
<dbReference type="EMBL" id="BC149086">
    <property type="protein sequence ID" value="AAI49087.1"/>
    <property type="molecule type" value="mRNA"/>
</dbReference>
<dbReference type="RefSeq" id="NP_001093783.1">
    <property type="nucleotide sequence ID" value="NM_001100313.1"/>
</dbReference>
<dbReference type="SMR" id="A6QP05"/>
<dbReference type="FunCoup" id="A6QP05">
    <property type="interactions" value="4"/>
</dbReference>
<dbReference type="STRING" id="9913.ENSBTAP00000064413"/>
<dbReference type="PaxDb" id="9913-ENSBTAP00000021443"/>
<dbReference type="GeneID" id="507276"/>
<dbReference type="KEGG" id="bta:507276"/>
<dbReference type="CTD" id="79758"/>
<dbReference type="VEuPathDB" id="HostDB:ENSBTAG00000016109"/>
<dbReference type="eggNOG" id="KOG1208">
    <property type="taxonomic scope" value="Eukaryota"/>
</dbReference>
<dbReference type="HOGENOM" id="CLU_010194_44_8_1"/>
<dbReference type="InParanoid" id="A6QP05"/>
<dbReference type="OrthoDB" id="417891at2759"/>
<dbReference type="TreeFam" id="TF353029"/>
<dbReference type="Proteomes" id="UP000009136">
    <property type="component" value="Chromosome 12"/>
</dbReference>
<dbReference type="Bgee" id="ENSBTAG00000016109">
    <property type="expression patterns" value="Expressed in saliva-secreting gland and 103 other cell types or tissues"/>
</dbReference>
<dbReference type="GO" id="GO:0016491">
    <property type="term" value="F:oxidoreductase activity"/>
    <property type="evidence" value="ECO:0007669"/>
    <property type="project" value="UniProtKB-KW"/>
</dbReference>
<dbReference type="CDD" id="cd09808">
    <property type="entry name" value="DHRS-12_like_SDR_c-like"/>
    <property type="match status" value="1"/>
</dbReference>
<dbReference type="Gene3D" id="3.40.50.720">
    <property type="entry name" value="NAD(P)-binding Rossmann-like Domain"/>
    <property type="match status" value="1"/>
</dbReference>
<dbReference type="InterPro" id="IPR036291">
    <property type="entry name" value="NAD(P)-bd_dom_sf"/>
</dbReference>
<dbReference type="InterPro" id="IPR002347">
    <property type="entry name" value="SDR_fam"/>
</dbReference>
<dbReference type="InterPro" id="IPR052992">
    <property type="entry name" value="SDR_member_12"/>
</dbReference>
<dbReference type="PANTHER" id="PTHR44656">
    <property type="entry name" value="DEHYDROGENASE/REDUCTASE SDR FAMILY MEMBER 12"/>
    <property type="match status" value="1"/>
</dbReference>
<dbReference type="PANTHER" id="PTHR44656:SF7">
    <property type="entry name" value="DEHYDROGENASE_REDUCTASE SDR FAMILY MEMBER 12"/>
    <property type="match status" value="1"/>
</dbReference>
<dbReference type="Pfam" id="PF00106">
    <property type="entry name" value="adh_short"/>
    <property type="match status" value="1"/>
</dbReference>
<dbReference type="PRINTS" id="PR00081">
    <property type="entry name" value="GDHRDH"/>
</dbReference>
<dbReference type="SUPFAM" id="SSF51735">
    <property type="entry name" value="NAD(P)-binding Rossmann-fold domains"/>
    <property type="match status" value="1"/>
</dbReference>
<organism>
    <name type="scientific">Bos taurus</name>
    <name type="common">Bovine</name>
    <dbReference type="NCBI Taxonomy" id="9913"/>
    <lineage>
        <taxon>Eukaryota</taxon>
        <taxon>Metazoa</taxon>
        <taxon>Chordata</taxon>
        <taxon>Craniata</taxon>
        <taxon>Vertebrata</taxon>
        <taxon>Euteleostomi</taxon>
        <taxon>Mammalia</taxon>
        <taxon>Eutheria</taxon>
        <taxon>Laurasiatheria</taxon>
        <taxon>Artiodactyla</taxon>
        <taxon>Ruminantia</taxon>
        <taxon>Pecora</taxon>
        <taxon>Bovidae</taxon>
        <taxon>Bovinae</taxon>
        <taxon>Bos</taxon>
    </lineage>
</organism>
<keyword id="KW-0520">NAD</keyword>
<keyword id="KW-0521">NADP</keyword>
<keyword id="KW-0560">Oxidoreductase</keyword>
<keyword id="KW-1185">Reference proteome</keyword>
<feature type="chain" id="PRO_0000312174" description="Dehydrogenase/reductase SDR family member 12">
    <location>
        <begin position="1"/>
        <end position="317"/>
    </location>
</feature>
<feature type="active site" description="Proton acceptor" evidence="3">
    <location>
        <position position="201"/>
    </location>
</feature>
<feature type="binding site" evidence="3">
    <location>
        <position position="50"/>
    </location>
    <ligand>
        <name>NAD(+)</name>
        <dbReference type="ChEBI" id="CHEBI:57540"/>
    </ligand>
</feature>
<feature type="binding site" evidence="3">
    <location>
        <position position="52"/>
    </location>
    <ligand>
        <name>NAD(+)</name>
        <dbReference type="ChEBI" id="CHEBI:57540"/>
    </ligand>
</feature>
<feature type="binding site" evidence="3">
    <location>
        <position position="175"/>
    </location>
    <ligand>
        <name>substrate</name>
    </ligand>
</feature>
<feature type="binding site" evidence="3">
    <location>
        <position position="201"/>
    </location>
    <ligand>
        <name>NAD(+)</name>
        <dbReference type="ChEBI" id="CHEBI:57540"/>
    </ligand>
</feature>
<feature type="binding site" evidence="3">
    <location>
        <position position="205"/>
    </location>
    <ligand>
        <name>NAD(+)</name>
        <dbReference type="ChEBI" id="CHEBI:57540"/>
    </ligand>
</feature>
<feature type="binding site" evidence="3">
    <location>
        <position position="234"/>
    </location>
    <ligand>
        <name>NAD(+)</name>
        <dbReference type="ChEBI" id="CHEBI:57540"/>
    </ligand>
</feature>
<sequence length="317" mass="35065">MLLYRSAAWFAKGLREYTKSGYESASKDFVPDDLEVQVPGRAFMVTGGNSGIGKATAMEIAKRGGTVHLVCRDHSRAEGAKAEIIRESGNQNIFLHIVDLSLPKSVWKFVENFKQEHTLNVLINNAGCMVNKRELTEDGLEKNFATNTLGVYVLTTALIPVLEKEHDPRVITVSSGGMLVQKLNTDDPQSERTAFDGTMVYAQNKRQQVVLTERWARAHPAIHFSCMHPGWVDTPGVRLSMPGFHARLGARLRSEAQGADTVLWLALAPAATAQPSGCFFQDRKPAPTHLPLARTSSSPAEEEKLIEILEELARRFK</sequence>
<protein>
    <recommendedName>
        <fullName evidence="2">Dehydrogenase/reductase SDR family member 12</fullName>
        <ecNumber evidence="4">1.1.-.-</ecNumber>
    </recommendedName>
    <alternativeName>
        <fullName evidence="2">Short-chain dehydrogenase/reductase family 40C member 1</fullName>
        <shortName evidence="2">Protein SDR40C1</shortName>
    </alternativeName>
</protein>
<accession>A6QP05</accession>
<reference key="1">
    <citation type="submission" date="2007-07" db="EMBL/GenBank/DDBJ databases">
        <authorList>
            <consortium name="NIH - Mammalian Gene Collection (MGC) project"/>
        </authorList>
    </citation>
    <scope>NUCLEOTIDE SEQUENCE [LARGE SCALE MRNA]</scope>
    <source>
        <strain>Hereford</strain>
        <tissue>Hippocampus</tissue>
    </source>
</reference>
<proteinExistence type="evidence at transcript level"/>